<sequence length="413" mass="45233">MSTLQSKDPKVFEAVQQELGRQRDKIELIASENFVSEAVMEAQSSVLTNKYAEGYPGRRYYGGCEYVDIVEDLARDRAKEIFGGEHVNVQPHSGAQANMAVYFTILEHGDTVLGMNLSHGGHLTHGSPVNFSGIQYNFVEYGVDKESQRIDYEEVRRLAKEHQPKMIVAGASAYPREIDFAKFREIADEVGAYLMVDMAHIAGLVAAGLHQNPVPHSHFVTTTTHKTLRGPRGGMIICNEEFAKQIDKSIFPGIQGGPLMHVIAAKAVAFGEALQPEFKSYGEAIIRNAKRLGEKLTSEGIDLVSGGTDNHLLLLDLRSLGLTGKVAEKALDDVGITTNKNTIPFDPESPFVTSGIRIGTAAVTSRGLDEEAMDEIGATIALTLKNVDNEEKMNEARERVDALTAKFPMYPNL</sequence>
<feature type="chain" id="PRO_0000113529" description="Serine hydroxymethyltransferase">
    <location>
        <begin position="1"/>
        <end position="413"/>
    </location>
</feature>
<feature type="binding site" evidence="1">
    <location>
        <position position="117"/>
    </location>
    <ligand>
        <name>(6S)-5,6,7,8-tetrahydrofolate</name>
        <dbReference type="ChEBI" id="CHEBI:57453"/>
    </ligand>
</feature>
<feature type="binding site" evidence="1">
    <location>
        <begin position="121"/>
        <end position="123"/>
    </location>
    <ligand>
        <name>(6S)-5,6,7,8-tetrahydrofolate</name>
        <dbReference type="ChEBI" id="CHEBI:57453"/>
    </ligand>
</feature>
<feature type="binding site" evidence="1">
    <location>
        <position position="241"/>
    </location>
    <ligand>
        <name>(6S)-5,6,7,8-tetrahydrofolate</name>
        <dbReference type="ChEBI" id="CHEBI:57453"/>
    </ligand>
</feature>
<feature type="binding site" evidence="1">
    <location>
        <begin position="349"/>
        <end position="351"/>
    </location>
    <ligand>
        <name>(6S)-5,6,7,8-tetrahydrofolate</name>
        <dbReference type="ChEBI" id="CHEBI:57453"/>
    </ligand>
</feature>
<feature type="site" description="Plays an important role in substrate specificity" evidence="1">
    <location>
        <position position="225"/>
    </location>
</feature>
<feature type="modified residue" description="N6-(pyridoxal phosphate)lysine" evidence="1">
    <location>
        <position position="226"/>
    </location>
</feature>
<accession>Q9K6G4</accession>
<name>GLYA_HALH5</name>
<organism>
    <name type="scientific">Halalkalibacterium halodurans (strain ATCC BAA-125 / DSM 18197 / FERM 7344 / JCM 9153 / C-125)</name>
    <name type="common">Bacillus halodurans</name>
    <dbReference type="NCBI Taxonomy" id="272558"/>
    <lineage>
        <taxon>Bacteria</taxon>
        <taxon>Bacillati</taxon>
        <taxon>Bacillota</taxon>
        <taxon>Bacilli</taxon>
        <taxon>Bacillales</taxon>
        <taxon>Bacillaceae</taxon>
        <taxon>Halalkalibacterium (ex Joshi et al. 2022)</taxon>
    </lineage>
</organism>
<gene>
    <name evidence="1" type="primary">glyA</name>
    <name type="ordered locus">BH3765</name>
</gene>
<evidence type="ECO:0000255" key="1">
    <source>
        <dbReference type="HAMAP-Rule" id="MF_00051"/>
    </source>
</evidence>
<keyword id="KW-0028">Amino-acid biosynthesis</keyword>
<keyword id="KW-0963">Cytoplasm</keyword>
<keyword id="KW-0554">One-carbon metabolism</keyword>
<keyword id="KW-0663">Pyridoxal phosphate</keyword>
<keyword id="KW-1185">Reference proteome</keyword>
<keyword id="KW-0808">Transferase</keyword>
<dbReference type="EC" id="2.1.2.1" evidence="1"/>
<dbReference type="EMBL" id="BA000004">
    <property type="protein sequence ID" value="BAB07484.1"/>
    <property type="molecule type" value="Genomic_DNA"/>
</dbReference>
<dbReference type="PIR" id="E84120">
    <property type="entry name" value="E84120"/>
</dbReference>
<dbReference type="RefSeq" id="WP_010899890.1">
    <property type="nucleotide sequence ID" value="NC_002570.2"/>
</dbReference>
<dbReference type="SMR" id="Q9K6G4"/>
<dbReference type="STRING" id="272558.gene:10729678"/>
<dbReference type="KEGG" id="bha:BH3765"/>
<dbReference type="eggNOG" id="COG0112">
    <property type="taxonomic scope" value="Bacteria"/>
</dbReference>
<dbReference type="HOGENOM" id="CLU_022477_2_1_9"/>
<dbReference type="OrthoDB" id="9803846at2"/>
<dbReference type="UniPathway" id="UPA00193"/>
<dbReference type="UniPathway" id="UPA00288">
    <property type="reaction ID" value="UER01023"/>
</dbReference>
<dbReference type="Proteomes" id="UP000001258">
    <property type="component" value="Chromosome"/>
</dbReference>
<dbReference type="GO" id="GO:0005829">
    <property type="term" value="C:cytosol"/>
    <property type="evidence" value="ECO:0007669"/>
    <property type="project" value="TreeGrafter"/>
</dbReference>
<dbReference type="GO" id="GO:0004372">
    <property type="term" value="F:glycine hydroxymethyltransferase activity"/>
    <property type="evidence" value="ECO:0007669"/>
    <property type="project" value="UniProtKB-UniRule"/>
</dbReference>
<dbReference type="GO" id="GO:0030170">
    <property type="term" value="F:pyridoxal phosphate binding"/>
    <property type="evidence" value="ECO:0007669"/>
    <property type="project" value="UniProtKB-UniRule"/>
</dbReference>
<dbReference type="GO" id="GO:0019264">
    <property type="term" value="P:glycine biosynthetic process from serine"/>
    <property type="evidence" value="ECO:0007669"/>
    <property type="project" value="UniProtKB-UniRule"/>
</dbReference>
<dbReference type="GO" id="GO:0035999">
    <property type="term" value="P:tetrahydrofolate interconversion"/>
    <property type="evidence" value="ECO:0007669"/>
    <property type="project" value="UniProtKB-UniRule"/>
</dbReference>
<dbReference type="CDD" id="cd00378">
    <property type="entry name" value="SHMT"/>
    <property type="match status" value="1"/>
</dbReference>
<dbReference type="FunFam" id="3.40.640.10:FF:000001">
    <property type="entry name" value="Serine hydroxymethyltransferase"/>
    <property type="match status" value="1"/>
</dbReference>
<dbReference type="FunFam" id="3.90.1150.10:FF:000003">
    <property type="entry name" value="Serine hydroxymethyltransferase"/>
    <property type="match status" value="1"/>
</dbReference>
<dbReference type="Gene3D" id="3.90.1150.10">
    <property type="entry name" value="Aspartate Aminotransferase, domain 1"/>
    <property type="match status" value="1"/>
</dbReference>
<dbReference type="Gene3D" id="3.40.640.10">
    <property type="entry name" value="Type I PLP-dependent aspartate aminotransferase-like (Major domain)"/>
    <property type="match status" value="1"/>
</dbReference>
<dbReference type="HAMAP" id="MF_00051">
    <property type="entry name" value="SHMT"/>
    <property type="match status" value="1"/>
</dbReference>
<dbReference type="InterPro" id="IPR015424">
    <property type="entry name" value="PyrdxlP-dep_Trfase"/>
</dbReference>
<dbReference type="InterPro" id="IPR015421">
    <property type="entry name" value="PyrdxlP-dep_Trfase_major"/>
</dbReference>
<dbReference type="InterPro" id="IPR015422">
    <property type="entry name" value="PyrdxlP-dep_Trfase_small"/>
</dbReference>
<dbReference type="InterPro" id="IPR001085">
    <property type="entry name" value="Ser_HO-MeTrfase"/>
</dbReference>
<dbReference type="InterPro" id="IPR049943">
    <property type="entry name" value="Ser_HO-MeTrfase-like"/>
</dbReference>
<dbReference type="InterPro" id="IPR019798">
    <property type="entry name" value="Ser_HO-MeTrfase_PLP_BS"/>
</dbReference>
<dbReference type="InterPro" id="IPR039429">
    <property type="entry name" value="SHMT-like_dom"/>
</dbReference>
<dbReference type="NCBIfam" id="NF000586">
    <property type="entry name" value="PRK00011.1"/>
    <property type="match status" value="1"/>
</dbReference>
<dbReference type="PANTHER" id="PTHR11680">
    <property type="entry name" value="SERINE HYDROXYMETHYLTRANSFERASE"/>
    <property type="match status" value="1"/>
</dbReference>
<dbReference type="PANTHER" id="PTHR11680:SF35">
    <property type="entry name" value="SERINE HYDROXYMETHYLTRANSFERASE 1"/>
    <property type="match status" value="1"/>
</dbReference>
<dbReference type="Pfam" id="PF00464">
    <property type="entry name" value="SHMT"/>
    <property type="match status" value="1"/>
</dbReference>
<dbReference type="PIRSF" id="PIRSF000412">
    <property type="entry name" value="SHMT"/>
    <property type="match status" value="1"/>
</dbReference>
<dbReference type="SUPFAM" id="SSF53383">
    <property type="entry name" value="PLP-dependent transferases"/>
    <property type="match status" value="1"/>
</dbReference>
<dbReference type="PROSITE" id="PS00096">
    <property type="entry name" value="SHMT"/>
    <property type="match status" value="1"/>
</dbReference>
<comment type="function">
    <text evidence="1">Catalyzes the reversible interconversion of serine and glycine with tetrahydrofolate (THF) serving as the one-carbon carrier. This reaction serves as the major source of one-carbon groups required for the biosynthesis of purines, thymidylate, methionine, and other important biomolecules. Also exhibits THF-independent aldolase activity toward beta-hydroxyamino acids, producing glycine and aldehydes, via a retro-aldol mechanism.</text>
</comment>
<comment type="catalytic activity">
    <reaction evidence="1">
        <text>(6R)-5,10-methylene-5,6,7,8-tetrahydrofolate + glycine + H2O = (6S)-5,6,7,8-tetrahydrofolate + L-serine</text>
        <dbReference type="Rhea" id="RHEA:15481"/>
        <dbReference type="ChEBI" id="CHEBI:15377"/>
        <dbReference type="ChEBI" id="CHEBI:15636"/>
        <dbReference type="ChEBI" id="CHEBI:33384"/>
        <dbReference type="ChEBI" id="CHEBI:57305"/>
        <dbReference type="ChEBI" id="CHEBI:57453"/>
        <dbReference type="EC" id="2.1.2.1"/>
    </reaction>
</comment>
<comment type="cofactor">
    <cofactor evidence="1">
        <name>pyridoxal 5'-phosphate</name>
        <dbReference type="ChEBI" id="CHEBI:597326"/>
    </cofactor>
</comment>
<comment type="pathway">
    <text evidence="1">One-carbon metabolism; tetrahydrofolate interconversion.</text>
</comment>
<comment type="pathway">
    <text evidence="1">Amino-acid biosynthesis; glycine biosynthesis; glycine from L-serine: step 1/1.</text>
</comment>
<comment type="subunit">
    <text evidence="1">Homodimer.</text>
</comment>
<comment type="subcellular location">
    <subcellularLocation>
        <location evidence="1">Cytoplasm</location>
    </subcellularLocation>
</comment>
<comment type="similarity">
    <text evidence="1">Belongs to the SHMT family.</text>
</comment>
<proteinExistence type="inferred from homology"/>
<reference key="1">
    <citation type="journal article" date="2000" name="Nucleic Acids Res.">
        <title>Complete genome sequence of the alkaliphilic bacterium Bacillus halodurans and genomic sequence comparison with Bacillus subtilis.</title>
        <authorList>
            <person name="Takami H."/>
            <person name="Nakasone K."/>
            <person name="Takaki Y."/>
            <person name="Maeno G."/>
            <person name="Sasaki R."/>
            <person name="Masui N."/>
            <person name="Fuji F."/>
            <person name="Hirama C."/>
            <person name="Nakamura Y."/>
            <person name="Ogasawara N."/>
            <person name="Kuhara S."/>
            <person name="Horikoshi K."/>
        </authorList>
    </citation>
    <scope>NUCLEOTIDE SEQUENCE [LARGE SCALE GENOMIC DNA]</scope>
    <source>
        <strain>ATCC BAA-125 / DSM 18197 / FERM 7344 / JCM 9153 / C-125</strain>
    </source>
</reference>
<protein>
    <recommendedName>
        <fullName evidence="1">Serine hydroxymethyltransferase</fullName>
        <shortName evidence="1">SHMT</shortName>
        <shortName evidence="1">Serine methylase</shortName>
        <ecNumber evidence="1">2.1.2.1</ecNumber>
    </recommendedName>
</protein>